<name>Y1437_BDEBA</name>
<sequence length="325" mass="34353">MPAAHSESMNKTKIAKIAFPIAALLCFFPFVSSAAALVLGIVLAVALGNPYVDKTRSYTHHLLSLSVIGLGAGMDLMVVGRVGLQGIGYTVVGISFTLLLGMLIGRMLKIERDTSTLITVGTAICGGSAIAAVAPTIRAKSHEVSVALGTVFMLNACALVIFPWIGHLLNLTQTQFGLWSALAIHDTSSVVGSTLQYGPESLQVGTTVKLARALWIVPVTFLIGLFYFRGQKVEGGAGKAKKPWFILGFLIAAALVTWIPELRPVGHVVETVAKRALVVTLFLIGANLTKETLKSVGIKPFLQGVGLWIVVASCTLGAILIGWIH</sequence>
<reference key="1">
    <citation type="journal article" date="2004" name="Science">
        <title>A predator unmasked: life cycle of Bdellovibrio bacteriovorus from a genomic perspective.</title>
        <authorList>
            <person name="Rendulic S."/>
            <person name="Jagtap P."/>
            <person name="Rosinus A."/>
            <person name="Eppinger M."/>
            <person name="Baar C."/>
            <person name="Lanz C."/>
            <person name="Keller H."/>
            <person name="Lambert C."/>
            <person name="Evans K.J."/>
            <person name="Goesmann A."/>
            <person name="Meyer F."/>
            <person name="Sockett R.E."/>
            <person name="Schuster S.C."/>
        </authorList>
    </citation>
    <scope>NUCLEOTIDE SEQUENCE [LARGE SCALE GENOMIC DNA]</scope>
    <source>
        <strain>ATCC 15356 / DSM 50701 / NCIMB 9529 / HD100</strain>
    </source>
</reference>
<proteinExistence type="inferred from homology"/>
<organism>
    <name type="scientific">Bdellovibrio bacteriovorus (strain ATCC 15356 / DSM 50701 / NCIMB 9529 / HD100)</name>
    <dbReference type="NCBI Taxonomy" id="264462"/>
    <lineage>
        <taxon>Bacteria</taxon>
        <taxon>Pseudomonadati</taxon>
        <taxon>Bdellovibrionota</taxon>
        <taxon>Bdellovibrionia</taxon>
        <taxon>Bdellovibrionales</taxon>
        <taxon>Pseudobdellovibrionaceae</taxon>
        <taxon>Bdellovibrio</taxon>
    </lineage>
</organism>
<dbReference type="EMBL" id="BX842649">
    <property type="protein sequence ID" value="CAE79326.1"/>
    <property type="molecule type" value="Genomic_DNA"/>
</dbReference>
<dbReference type="KEGG" id="bba:Bd1437"/>
<dbReference type="eggNOG" id="COG2855">
    <property type="taxonomic scope" value="Bacteria"/>
</dbReference>
<dbReference type="HOGENOM" id="CLU_033541_2_0_7"/>
<dbReference type="Proteomes" id="UP000008080">
    <property type="component" value="Chromosome"/>
</dbReference>
<dbReference type="GO" id="GO:0005886">
    <property type="term" value="C:plasma membrane"/>
    <property type="evidence" value="ECO:0007669"/>
    <property type="project" value="UniProtKB-SubCell"/>
</dbReference>
<dbReference type="InterPro" id="IPR018383">
    <property type="entry name" value="UPF0324_pro"/>
</dbReference>
<dbReference type="PANTHER" id="PTHR30106">
    <property type="entry name" value="INNER MEMBRANE PROTEIN YEIH-RELATED"/>
    <property type="match status" value="1"/>
</dbReference>
<dbReference type="PANTHER" id="PTHR30106:SF1">
    <property type="entry name" value="UPF0324 MEMBRANE PROTEIN FN0533"/>
    <property type="match status" value="1"/>
</dbReference>
<dbReference type="Pfam" id="PF03601">
    <property type="entry name" value="Cons_hypoth698"/>
    <property type="match status" value="1"/>
</dbReference>
<evidence type="ECO:0000255" key="1"/>
<evidence type="ECO:0000305" key="2"/>
<feature type="chain" id="PRO_0000157395" description="UPF0324 membrane protein Bd1437">
    <location>
        <begin position="1"/>
        <end position="325"/>
    </location>
</feature>
<feature type="transmembrane region" description="Helical" evidence="1">
    <location>
        <begin position="21"/>
        <end position="43"/>
    </location>
</feature>
<feature type="transmembrane region" description="Helical" evidence="1">
    <location>
        <begin position="58"/>
        <end position="80"/>
    </location>
</feature>
<feature type="transmembrane region" description="Helical" evidence="1">
    <location>
        <begin position="87"/>
        <end position="105"/>
    </location>
</feature>
<feature type="transmembrane region" description="Helical" evidence="1">
    <location>
        <begin position="115"/>
        <end position="137"/>
    </location>
</feature>
<feature type="transmembrane region" description="Helical" evidence="1">
    <location>
        <begin position="144"/>
        <end position="166"/>
    </location>
</feature>
<feature type="transmembrane region" description="Helical" evidence="1">
    <location>
        <begin position="211"/>
        <end position="230"/>
    </location>
</feature>
<feature type="transmembrane region" description="Helical" evidence="1">
    <location>
        <begin position="243"/>
        <end position="260"/>
    </location>
</feature>
<feature type="transmembrane region" description="Helical" evidence="1">
    <location>
        <begin position="302"/>
        <end position="324"/>
    </location>
</feature>
<comment type="subcellular location">
    <subcellularLocation>
        <location evidence="2">Cell membrane</location>
        <topology evidence="2">Multi-pass membrane protein</topology>
    </subcellularLocation>
</comment>
<comment type="similarity">
    <text evidence="2">Belongs to the UPF0324 family.</text>
</comment>
<accession>Q6MN26</accession>
<gene>
    <name type="ordered locus">Bd1437</name>
</gene>
<protein>
    <recommendedName>
        <fullName>UPF0324 membrane protein Bd1437</fullName>
    </recommendedName>
</protein>
<keyword id="KW-1003">Cell membrane</keyword>
<keyword id="KW-0472">Membrane</keyword>
<keyword id="KW-1185">Reference proteome</keyword>
<keyword id="KW-0812">Transmembrane</keyword>
<keyword id="KW-1133">Transmembrane helix</keyword>